<reference key="1">
    <citation type="journal article" date="1988" name="Proc. Natl. Acad. Sci. U.S.A.">
        <title>Structure and regulation of the rat 1,25-dihydroxyvitamin D3 receptor.</title>
        <authorList>
            <person name="Burmester J.K."/>
            <person name="Wiese R.J."/>
            <person name="Maeda N."/>
            <person name="Deluca H."/>
        </authorList>
    </citation>
    <scope>NUCLEOTIDE SEQUENCE [MRNA]</scope>
    <scope>TISSUE SPECIFICITY</scope>
</reference>
<reference key="2">
    <citation type="journal article" date="1988" name="Proc. Natl. Acad. Sci. U.S.A.">
        <title>Isolation and expression of rat 1,25-dihydroxyvitamin D3 receptor cDNA.</title>
        <authorList>
            <person name="Burmester J.K."/>
            <person name="Maeda N."/>
            <person name="Deluca H.F."/>
        </authorList>
    </citation>
    <scope>NUCLEOTIDE SEQUENCE [MRNA] OF 58-423</scope>
    <source>
        <tissue>Kidney</tissue>
    </source>
</reference>
<reference key="3">
    <citation type="journal article" date="2000" name="Mol. Cell. Biol.">
        <title>A new family of nuclear receptor coregulators that integrates nuclear receptor signaling through CBP.</title>
        <authorList>
            <person name="Mahajan M.A."/>
            <person name="Samuels H.H."/>
        </authorList>
    </citation>
    <scope>INTERACTION WITH NCOA6</scope>
</reference>
<reference evidence="11 12 13 14" key="4">
    <citation type="journal article" date="2004" name="Biochemistry">
        <title>Molecular structure of the rat vitamin D receptor ligand binding domain complexed with 2-carbon-substituted vitamin D3 hormone analogues and a LXXLL-containing coactivator peptide.</title>
        <authorList>
            <person name="Vanhooke J.L."/>
            <person name="Benning M.M."/>
            <person name="Bauer C.B."/>
            <person name="Pike J.W."/>
            <person name="DeLuca H.F."/>
        </authorList>
    </citation>
    <scope>X-RAY CRYSTALLOGRAPHY (1.9 ANGSTROMS) OF 116-423 IN COMPLEXES WITH CALCITRIOL AND VITAMIN D3 ANALOGS AND MED1</scope>
</reference>
<reference evidence="15 16" key="5">
    <citation type="journal article" date="2007" name="Arch. Biochem. Biophys.">
        <title>New analogs of 2-methylene-19-nor-(20S)-1,25-dihydroxyvitamin D3 with conformationally restricted side chains: evaluation of biological activity and structural determination of VDR-bound conformations.</title>
        <authorList>
            <person name="Vanhooke J.L."/>
            <person name="Tadi B.P."/>
            <person name="Benning M.M."/>
            <person name="Plum L.A."/>
            <person name="DeLuca H.F."/>
        </authorList>
    </citation>
    <scope>X-RAY CRYSTALLOGRAPHY (1.98 ANGSTROMS) OF 116-423 IN COMPLEXES WITH VITAMIN D3 ANALOGS AND MED1</scope>
    <scope>FUNCTION</scope>
</reference>
<gene>
    <name type="primary">Vdr</name>
    <name type="synonym">Nr1i1</name>
</gene>
<organism>
    <name type="scientific">Rattus norvegicus</name>
    <name type="common">Rat</name>
    <dbReference type="NCBI Taxonomy" id="10116"/>
    <lineage>
        <taxon>Eukaryota</taxon>
        <taxon>Metazoa</taxon>
        <taxon>Chordata</taxon>
        <taxon>Craniata</taxon>
        <taxon>Vertebrata</taxon>
        <taxon>Euteleostomi</taxon>
        <taxon>Mammalia</taxon>
        <taxon>Eutheria</taxon>
        <taxon>Euarchontoglires</taxon>
        <taxon>Glires</taxon>
        <taxon>Rodentia</taxon>
        <taxon>Myomorpha</taxon>
        <taxon>Muroidea</taxon>
        <taxon>Muridae</taxon>
        <taxon>Murinae</taxon>
        <taxon>Rattus</taxon>
    </lineage>
</organism>
<evidence type="ECO:0000250" key="1">
    <source>
        <dbReference type="UniProtKB" id="P11473"/>
    </source>
</evidence>
<evidence type="ECO:0000250" key="2">
    <source>
        <dbReference type="UniProtKB" id="P48281"/>
    </source>
</evidence>
<evidence type="ECO:0000255" key="3">
    <source>
        <dbReference type="PROSITE-ProRule" id="PRU00407"/>
    </source>
</evidence>
<evidence type="ECO:0000255" key="4">
    <source>
        <dbReference type="PROSITE-ProRule" id="PRU01189"/>
    </source>
</evidence>
<evidence type="ECO:0000256" key="5">
    <source>
        <dbReference type="SAM" id="MobiDB-lite"/>
    </source>
</evidence>
<evidence type="ECO:0000269" key="6">
    <source>
    </source>
</evidence>
<evidence type="ECO:0000269" key="7">
    <source>
    </source>
</evidence>
<evidence type="ECO:0000269" key="8">
    <source>
    </source>
</evidence>
<evidence type="ECO:0000269" key="9">
    <source>
    </source>
</evidence>
<evidence type="ECO:0000305" key="10"/>
<evidence type="ECO:0007744" key="11">
    <source>
        <dbReference type="PDB" id="1RJK"/>
    </source>
</evidence>
<evidence type="ECO:0007744" key="12">
    <source>
        <dbReference type="PDB" id="1RK3"/>
    </source>
</evidence>
<evidence type="ECO:0007744" key="13">
    <source>
        <dbReference type="PDB" id="1RKG"/>
    </source>
</evidence>
<evidence type="ECO:0007744" key="14">
    <source>
        <dbReference type="PDB" id="1RKH"/>
    </source>
</evidence>
<evidence type="ECO:0007744" key="15">
    <source>
        <dbReference type="PDB" id="2O4J"/>
    </source>
</evidence>
<evidence type="ECO:0007744" key="16">
    <source>
        <dbReference type="PDB" id="2O4R"/>
    </source>
</evidence>
<evidence type="ECO:0007829" key="17">
    <source>
        <dbReference type="PDB" id="3VT3"/>
    </source>
</evidence>
<evidence type="ECO:0007829" key="18">
    <source>
        <dbReference type="PDB" id="3VTC"/>
    </source>
</evidence>
<evidence type="ECO:0007829" key="19">
    <source>
        <dbReference type="PDB" id="3VTD"/>
    </source>
</evidence>
<evidence type="ECO:0007829" key="20">
    <source>
        <dbReference type="PDB" id="5H1E"/>
    </source>
</evidence>
<keyword id="KW-0002">3D-structure</keyword>
<keyword id="KW-0963">Cytoplasm</keyword>
<keyword id="KW-0238">DNA-binding</keyword>
<keyword id="KW-0479">Metal-binding</keyword>
<keyword id="KW-0539">Nucleus</keyword>
<keyword id="KW-0675">Receptor</keyword>
<keyword id="KW-1185">Reference proteome</keyword>
<keyword id="KW-0804">Transcription</keyword>
<keyword id="KW-0805">Transcription regulation</keyword>
<keyword id="KW-0832">Ubl conjugation</keyword>
<keyword id="KW-0862">Zinc</keyword>
<keyword id="KW-0863">Zinc-finger</keyword>
<name>VDR_RAT</name>
<dbReference type="EMBL" id="J04147">
    <property type="protein sequence ID" value="AAA41089.1"/>
    <property type="molecule type" value="mRNA"/>
</dbReference>
<dbReference type="PIR" id="A31761">
    <property type="entry name" value="A31761"/>
</dbReference>
<dbReference type="RefSeq" id="NP_058754.1">
    <property type="nucleotide sequence ID" value="NM_017058.1"/>
</dbReference>
<dbReference type="PDB" id="1RJK">
    <property type="method" value="X-ray"/>
    <property type="resolution" value="1.99 A"/>
    <property type="chains" value="A=116-423"/>
</dbReference>
<dbReference type="PDB" id="1RK3">
    <property type="method" value="X-ray"/>
    <property type="resolution" value="2.20 A"/>
    <property type="chains" value="A=116-423"/>
</dbReference>
<dbReference type="PDB" id="1RKG">
    <property type="method" value="X-ray"/>
    <property type="resolution" value="1.90 A"/>
    <property type="chains" value="A=116-423"/>
</dbReference>
<dbReference type="PDB" id="1RKH">
    <property type="method" value="X-ray"/>
    <property type="resolution" value="2.28 A"/>
    <property type="chains" value="A=116-423"/>
</dbReference>
<dbReference type="PDB" id="2O4J">
    <property type="method" value="X-ray"/>
    <property type="resolution" value="1.74 A"/>
    <property type="chains" value="A=116-423"/>
</dbReference>
<dbReference type="PDB" id="2O4R">
    <property type="method" value="X-ray"/>
    <property type="resolution" value="1.98 A"/>
    <property type="chains" value="A=116-423"/>
</dbReference>
<dbReference type="PDB" id="2ZFX">
    <property type="method" value="X-ray"/>
    <property type="resolution" value="1.99 A"/>
    <property type="chains" value="A=116-423"/>
</dbReference>
<dbReference type="PDB" id="2ZL9">
    <property type="method" value="X-ray"/>
    <property type="resolution" value="1.90 A"/>
    <property type="chains" value="A=116-423"/>
</dbReference>
<dbReference type="PDB" id="2ZLA">
    <property type="method" value="X-ray"/>
    <property type="resolution" value="2.00 A"/>
    <property type="chains" value="A=116-423"/>
</dbReference>
<dbReference type="PDB" id="2ZLC">
    <property type="method" value="X-ray"/>
    <property type="resolution" value="2.00 A"/>
    <property type="chains" value="A=116-423"/>
</dbReference>
<dbReference type="PDB" id="2ZMH">
    <property type="method" value="X-ray"/>
    <property type="resolution" value="2.10 A"/>
    <property type="chains" value="A=116-423"/>
</dbReference>
<dbReference type="PDB" id="2ZMI">
    <property type="method" value="X-ray"/>
    <property type="resolution" value="1.70 A"/>
    <property type="chains" value="A=116-423"/>
</dbReference>
<dbReference type="PDB" id="2ZMJ">
    <property type="method" value="X-ray"/>
    <property type="resolution" value="2.35 A"/>
    <property type="chains" value="A=116-423"/>
</dbReference>
<dbReference type="PDB" id="2ZXM">
    <property type="method" value="X-ray"/>
    <property type="resolution" value="3.01 A"/>
    <property type="chains" value="A=116-423"/>
</dbReference>
<dbReference type="PDB" id="2ZXN">
    <property type="method" value="X-ray"/>
    <property type="resolution" value="2.10 A"/>
    <property type="chains" value="A=116-423"/>
</dbReference>
<dbReference type="PDB" id="3A2H">
    <property type="method" value="X-ray"/>
    <property type="resolution" value="2.50 A"/>
    <property type="chains" value="A=116-423"/>
</dbReference>
<dbReference type="PDB" id="3AFR">
    <property type="method" value="X-ray"/>
    <property type="resolution" value="2.00 A"/>
    <property type="chains" value="A=116-423"/>
</dbReference>
<dbReference type="PDB" id="3AUN">
    <property type="method" value="X-ray"/>
    <property type="resolution" value="1.81 A"/>
    <property type="chains" value="A=116-423"/>
</dbReference>
<dbReference type="PDB" id="3VJS">
    <property type="method" value="X-ray"/>
    <property type="resolution" value="1.93 A"/>
    <property type="chains" value="A=116-423"/>
</dbReference>
<dbReference type="PDB" id="3VJT">
    <property type="method" value="X-ray"/>
    <property type="resolution" value="2.00 A"/>
    <property type="chains" value="A=116-423"/>
</dbReference>
<dbReference type="PDB" id="3VRT">
    <property type="method" value="X-ray"/>
    <property type="resolution" value="2.40 A"/>
    <property type="chains" value="A=116-423"/>
</dbReference>
<dbReference type="PDB" id="3VRU">
    <property type="method" value="X-ray"/>
    <property type="resolution" value="2.00 A"/>
    <property type="chains" value="A=116-423"/>
</dbReference>
<dbReference type="PDB" id="3VRV">
    <property type="method" value="X-ray"/>
    <property type="resolution" value="1.90 A"/>
    <property type="chains" value="A=116-423"/>
</dbReference>
<dbReference type="PDB" id="3VRW">
    <property type="method" value="X-ray"/>
    <property type="resolution" value="2.40 A"/>
    <property type="chains" value="A=116-423"/>
</dbReference>
<dbReference type="PDB" id="3VT3">
    <property type="method" value="X-ray"/>
    <property type="resolution" value="1.70 A"/>
    <property type="chains" value="A=116-423"/>
</dbReference>
<dbReference type="PDB" id="3VT4">
    <property type="method" value="X-ray"/>
    <property type="resolution" value="1.90 A"/>
    <property type="chains" value="A=116-423"/>
</dbReference>
<dbReference type="PDB" id="3VT5">
    <property type="method" value="X-ray"/>
    <property type="resolution" value="2.11 A"/>
    <property type="chains" value="A=116-423"/>
</dbReference>
<dbReference type="PDB" id="3VT6">
    <property type="method" value="X-ray"/>
    <property type="resolution" value="2.30 A"/>
    <property type="chains" value="A=116-423"/>
</dbReference>
<dbReference type="PDB" id="3VT7">
    <property type="method" value="X-ray"/>
    <property type="resolution" value="1.65 A"/>
    <property type="chains" value="A=116-423"/>
</dbReference>
<dbReference type="PDB" id="3VT8">
    <property type="method" value="X-ray"/>
    <property type="resolution" value="2.10 A"/>
    <property type="chains" value="A=116-423"/>
</dbReference>
<dbReference type="PDB" id="3VT9">
    <property type="method" value="X-ray"/>
    <property type="resolution" value="2.35 A"/>
    <property type="chains" value="A=116-423"/>
</dbReference>
<dbReference type="PDB" id="3VTB">
    <property type="method" value="X-ray"/>
    <property type="resolution" value="2.00 A"/>
    <property type="chains" value="A=116-423"/>
</dbReference>
<dbReference type="PDB" id="3VTC">
    <property type="method" value="X-ray"/>
    <property type="resolution" value="1.50 A"/>
    <property type="chains" value="A=116-423"/>
</dbReference>
<dbReference type="PDB" id="3VTD">
    <property type="method" value="X-ray"/>
    <property type="resolution" value="2.70 A"/>
    <property type="chains" value="A=116-423"/>
</dbReference>
<dbReference type="PDB" id="3W0G">
    <property type="method" value="X-ray"/>
    <property type="resolution" value="1.94 A"/>
    <property type="chains" value="A=121-420"/>
</dbReference>
<dbReference type="PDB" id="3W0H">
    <property type="method" value="X-ray"/>
    <property type="resolution" value="1.80 A"/>
    <property type="chains" value="A=118-420"/>
</dbReference>
<dbReference type="PDB" id="3W0I">
    <property type="method" value="X-ray"/>
    <property type="resolution" value="1.90 A"/>
    <property type="chains" value="A=121-420"/>
</dbReference>
<dbReference type="PDB" id="3W0J">
    <property type="method" value="X-ray"/>
    <property type="resolution" value="1.84 A"/>
    <property type="chains" value="A=121-420"/>
</dbReference>
<dbReference type="PDB" id="3W5P">
    <property type="method" value="X-ray"/>
    <property type="resolution" value="1.90 A"/>
    <property type="chains" value="A=116-423"/>
</dbReference>
<dbReference type="PDB" id="3W5Q">
    <property type="method" value="X-ray"/>
    <property type="resolution" value="1.90 A"/>
    <property type="chains" value="A=116-423"/>
</dbReference>
<dbReference type="PDB" id="3W5R">
    <property type="method" value="X-ray"/>
    <property type="resolution" value="2.20 A"/>
    <property type="chains" value="A=116-423"/>
</dbReference>
<dbReference type="PDB" id="3W5T">
    <property type="method" value="X-ray"/>
    <property type="resolution" value="2.29 A"/>
    <property type="chains" value="A=116-423"/>
</dbReference>
<dbReference type="PDB" id="3WT5">
    <property type="method" value="X-ray"/>
    <property type="resolution" value="1.90 A"/>
    <property type="chains" value="A=116-423"/>
</dbReference>
<dbReference type="PDB" id="3WT6">
    <property type="method" value="X-ray"/>
    <property type="resolution" value="2.00 A"/>
    <property type="chains" value="A=116-423"/>
</dbReference>
<dbReference type="PDB" id="3WT7">
    <property type="method" value="X-ray"/>
    <property type="resolution" value="2.40 A"/>
    <property type="chains" value="A=116-423"/>
</dbReference>
<dbReference type="PDB" id="3WTQ">
    <property type="method" value="X-ray"/>
    <property type="resolution" value="2.10 A"/>
    <property type="chains" value="A=116-423"/>
</dbReference>
<dbReference type="PDB" id="4YNK">
    <property type="method" value="X-ray"/>
    <property type="resolution" value="2.30 A"/>
    <property type="chains" value="A=116-423"/>
</dbReference>
<dbReference type="PDB" id="5AWJ">
    <property type="method" value="X-ray"/>
    <property type="resolution" value="2.20 A"/>
    <property type="chains" value="A=116-423"/>
</dbReference>
<dbReference type="PDB" id="5AWK">
    <property type="method" value="X-ray"/>
    <property type="resolution" value="2.90 A"/>
    <property type="chains" value="A=116-423"/>
</dbReference>
<dbReference type="PDB" id="5B41">
    <property type="method" value="X-ray"/>
    <property type="resolution" value="1.89 A"/>
    <property type="chains" value="A=116-423"/>
</dbReference>
<dbReference type="PDB" id="5B5B">
    <property type="method" value="X-ray"/>
    <property type="resolution" value="2.00 A"/>
    <property type="chains" value="A/D=116-423"/>
</dbReference>
<dbReference type="PDB" id="5GIC">
    <property type="method" value="X-ray"/>
    <property type="resolution" value="2.35 A"/>
    <property type="chains" value="A=124-420"/>
</dbReference>
<dbReference type="PDB" id="5GID">
    <property type="method" value="X-ray"/>
    <property type="resolution" value="2.15 A"/>
    <property type="chains" value="A=124-419"/>
</dbReference>
<dbReference type="PDB" id="5GIE">
    <property type="method" value="X-ray"/>
    <property type="resolution" value="2.39 A"/>
    <property type="chains" value="A/D=117-419"/>
</dbReference>
<dbReference type="PDB" id="5H1E">
    <property type="method" value="X-ray"/>
    <property type="resolution" value="2.60 A"/>
    <property type="chains" value="A=116-423"/>
</dbReference>
<dbReference type="PDB" id="5XPL">
    <property type="method" value="X-ray"/>
    <property type="resolution" value="2.05 A"/>
    <property type="chains" value="A=116-423"/>
</dbReference>
<dbReference type="PDB" id="5XPM">
    <property type="method" value="X-ray"/>
    <property type="resolution" value="2.20 A"/>
    <property type="chains" value="A=116-423"/>
</dbReference>
<dbReference type="PDB" id="5XPN">
    <property type="method" value="X-ray"/>
    <property type="resolution" value="1.96 A"/>
    <property type="chains" value="A=116-423"/>
</dbReference>
<dbReference type="PDB" id="5XPO">
    <property type="method" value="X-ray"/>
    <property type="resolution" value="2.28 A"/>
    <property type="chains" value="A=116-423"/>
</dbReference>
<dbReference type="PDB" id="5XPP">
    <property type="method" value="X-ray"/>
    <property type="resolution" value="2.85 A"/>
    <property type="chains" value="A=116-423"/>
</dbReference>
<dbReference type="PDB" id="5XUQ">
    <property type="method" value="X-ray"/>
    <property type="resolution" value="2.80 A"/>
    <property type="chains" value="A=116-423"/>
</dbReference>
<dbReference type="PDB" id="5XZF">
    <property type="method" value="X-ray"/>
    <property type="resolution" value="2.10 A"/>
    <property type="chains" value="A=116-423"/>
</dbReference>
<dbReference type="PDB" id="5XZH">
    <property type="method" value="X-ray"/>
    <property type="resolution" value="2.00 A"/>
    <property type="chains" value="A=116-423"/>
</dbReference>
<dbReference type="PDB" id="5ZWE">
    <property type="method" value="X-ray"/>
    <property type="resolution" value="2.72 A"/>
    <property type="chains" value="A=116-423"/>
</dbReference>
<dbReference type="PDB" id="5ZWF">
    <property type="method" value="X-ray"/>
    <property type="resolution" value="2.10 A"/>
    <property type="chains" value="A=116-423"/>
</dbReference>
<dbReference type="PDB" id="5ZWH">
    <property type="method" value="X-ray"/>
    <property type="resolution" value="2.38 A"/>
    <property type="chains" value="A=116-423"/>
</dbReference>
<dbReference type="PDB" id="5ZWI">
    <property type="method" value="X-ray"/>
    <property type="resolution" value="2.40 A"/>
    <property type="chains" value="A=116-423"/>
</dbReference>
<dbReference type="PDB" id="6JEZ">
    <property type="method" value="X-ray"/>
    <property type="resolution" value="2.30 A"/>
    <property type="chains" value="A=116-163, A=213-423"/>
</dbReference>
<dbReference type="PDB" id="6K5O">
    <property type="method" value="X-ray"/>
    <property type="resolution" value="1.80 A"/>
    <property type="chains" value="A=116-419"/>
</dbReference>
<dbReference type="PDB" id="7C7V">
    <property type="method" value="X-ray"/>
    <property type="resolution" value="2.00 A"/>
    <property type="chains" value="A=116-423"/>
</dbReference>
<dbReference type="PDB" id="7C7W">
    <property type="method" value="X-ray"/>
    <property type="resolution" value="1.90 A"/>
    <property type="chains" value="A=116-423"/>
</dbReference>
<dbReference type="PDB" id="7VQP">
    <property type="method" value="X-ray"/>
    <property type="resolution" value="1.94 A"/>
    <property type="chains" value="A=116-423"/>
</dbReference>
<dbReference type="PDBsum" id="1RJK"/>
<dbReference type="PDBsum" id="1RK3"/>
<dbReference type="PDBsum" id="1RKG"/>
<dbReference type="PDBsum" id="1RKH"/>
<dbReference type="PDBsum" id="2O4J"/>
<dbReference type="PDBsum" id="2O4R"/>
<dbReference type="PDBsum" id="2ZFX"/>
<dbReference type="PDBsum" id="2ZL9"/>
<dbReference type="PDBsum" id="2ZLA"/>
<dbReference type="PDBsum" id="2ZLC"/>
<dbReference type="PDBsum" id="2ZMH"/>
<dbReference type="PDBsum" id="2ZMI"/>
<dbReference type="PDBsum" id="2ZMJ"/>
<dbReference type="PDBsum" id="2ZXM"/>
<dbReference type="PDBsum" id="2ZXN"/>
<dbReference type="PDBsum" id="3A2H"/>
<dbReference type="PDBsum" id="3AFR"/>
<dbReference type="PDBsum" id="3AUN"/>
<dbReference type="PDBsum" id="3VJS"/>
<dbReference type="PDBsum" id="3VJT"/>
<dbReference type="PDBsum" id="3VRT"/>
<dbReference type="PDBsum" id="3VRU"/>
<dbReference type="PDBsum" id="3VRV"/>
<dbReference type="PDBsum" id="3VRW"/>
<dbReference type="PDBsum" id="3VT3"/>
<dbReference type="PDBsum" id="3VT4"/>
<dbReference type="PDBsum" id="3VT5"/>
<dbReference type="PDBsum" id="3VT6"/>
<dbReference type="PDBsum" id="3VT7"/>
<dbReference type="PDBsum" id="3VT8"/>
<dbReference type="PDBsum" id="3VT9"/>
<dbReference type="PDBsum" id="3VTB"/>
<dbReference type="PDBsum" id="3VTC"/>
<dbReference type="PDBsum" id="3VTD"/>
<dbReference type="PDBsum" id="3W0G"/>
<dbReference type="PDBsum" id="3W0H"/>
<dbReference type="PDBsum" id="3W0I"/>
<dbReference type="PDBsum" id="3W0J"/>
<dbReference type="PDBsum" id="3W5P"/>
<dbReference type="PDBsum" id="3W5Q"/>
<dbReference type="PDBsum" id="3W5R"/>
<dbReference type="PDBsum" id="3W5T"/>
<dbReference type="PDBsum" id="3WT5"/>
<dbReference type="PDBsum" id="3WT6"/>
<dbReference type="PDBsum" id="3WT7"/>
<dbReference type="PDBsum" id="3WTQ"/>
<dbReference type="PDBsum" id="4YNK"/>
<dbReference type="PDBsum" id="5AWJ"/>
<dbReference type="PDBsum" id="5AWK"/>
<dbReference type="PDBsum" id="5B41"/>
<dbReference type="PDBsum" id="5B5B"/>
<dbReference type="PDBsum" id="5GIC"/>
<dbReference type="PDBsum" id="5GID"/>
<dbReference type="PDBsum" id="5GIE"/>
<dbReference type="PDBsum" id="5H1E"/>
<dbReference type="PDBsum" id="5XPL"/>
<dbReference type="PDBsum" id="5XPM"/>
<dbReference type="PDBsum" id="5XPN"/>
<dbReference type="PDBsum" id="5XPO"/>
<dbReference type="PDBsum" id="5XPP"/>
<dbReference type="PDBsum" id="5XUQ"/>
<dbReference type="PDBsum" id="5XZF"/>
<dbReference type="PDBsum" id="5XZH"/>
<dbReference type="PDBsum" id="5ZWE"/>
<dbReference type="PDBsum" id="5ZWF"/>
<dbReference type="PDBsum" id="5ZWH"/>
<dbReference type="PDBsum" id="5ZWI"/>
<dbReference type="PDBsum" id="6JEZ"/>
<dbReference type="PDBsum" id="6K5O"/>
<dbReference type="PDBsum" id="7C7V"/>
<dbReference type="PDBsum" id="7C7W"/>
<dbReference type="PDBsum" id="7VQP"/>
<dbReference type="SMR" id="P13053"/>
<dbReference type="BioGRID" id="246986">
    <property type="interactions" value="6"/>
</dbReference>
<dbReference type="CORUM" id="P13053"/>
<dbReference type="FunCoup" id="P13053">
    <property type="interactions" value="586"/>
</dbReference>
<dbReference type="MINT" id="P13053"/>
<dbReference type="STRING" id="10116.ENSRNOP00000070446"/>
<dbReference type="BindingDB" id="P13053"/>
<dbReference type="ChEMBL" id="CHEMBL3150"/>
<dbReference type="DrugCentral" id="P13053"/>
<dbReference type="GuidetoPHARMACOLOGY" id="605"/>
<dbReference type="PhosphoSitePlus" id="P13053"/>
<dbReference type="PaxDb" id="10116-ENSRNOP00000011601"/>
<dbReference type="GeneID" id="24873"/>
<dbReference type="KEGG" id="rno:24873"/>
<dbReference type="UCSC" id="RGD:3959">
    <property type="organism name" value="rat"/>
</dbReference>
<dbReference type="AGR" id="RGD:3959"/>
<dbReference type="CTD" id="7421"/>
<dbReference type="RGD" id="3959">
    <property type="gene designation" value="Vdr"/>
</dbReference>
<dbReference type="eggNOG" id="KOG3575">
    <property type="taxonomic scope" value="Eukaryota"/>
</dbReference>
<dbReference type="InParanoid" id="P13053"/>
<dbReference type="PhylomeDB" id="P13053"/>
<dbReference type="Reactome" id="R-RNO-196791">
    <property type="pathway name" value="Vitamin D (calciferol) metabolism"/>
</dbReference>
<dbReference type="Reactome" id="R-RNO-383280">
    <property type="pathway name" value="Nuclear Receptor transcription pathway"/>
</dbReference>
<dbReference type="Reactome" id="R-RNO-4090294">
    <property type="pathway name" value="SUMOylation of intracellular receptors"/>
</dbReference>
<dbReference type="EvolutionaryTrace" id="P13053"/>
<dbReference type="PRO" id="PR:P13053"/>
<dbReference type="Proteomes" id="UP000002494">
    <property type="component" value="Unplaced"/>
</dbReference>
<dbReference type="GO" id="GO:0005901">
    <property type="term" value="C:caveola"/>
    <property type="evidence" value="ECO:0000314"/>
    <property type="project" value="RGD"/>
</dbReference>
<dbReference type="GO" id="GO:0000785">
    <property type="term" value="C:chromatin"/>
    <property type="evidence" value="ECO:0000266"/>
    <property type="project" value="RGD"/>
</dbReference>
<dbReference type="GO" id="GO:0001651">
    <property type="term" value="C:dense fibrillar component"/>
    <property type="evidence" value="ECO:0000314"/>
    <property type="project" value="RGD"/>
</dbReference>
<dbReference type="GO" id="GO:0000791">
    <property type="term" value="C:euchromatin"/>
    <property type="evidence" value="ECO:0000314"/>
    <property type="project" value="RGD"/>
</dbReference>
<dbReference type="GO" id="GO:0000792">
    <property type="term" value="C:heterochromatin"/>
    <property type="evidence" value="ECO:0000314"/>
    <property type="project" value="RGD"/>
</dbReference>
<dbReference type="GO" id="GO:0016363">
    <property type="term" value="C:nuclear matrix"/>
    <property type="evidence" value="ECO:0000314"/>
    <property type="project" value="RGD"/>
</dbReference>
<dbReference type="GO" id="GO:0005634">
    <property type="term" value="C:nucleus"/>
    <property type="evidence" value="ECO:0000266"/>
    <property type="project" value="RGD"/>
</dbReference>
<dbReference type="GO" id="GO:0048471">
    <property type="term" value="C:perinuclear region of cytoplasm"/>
    <property type="evidence" value="ECO:0000314"/>
    <property type="project" value="RGD"/>
</dbReference>
<dbReference type="GO" id="GO:0043235">
    <property type="term" value="C:receptor complex"/>
    <property type="evidence" value="ECO:0000266"/>
    <property type="project" value="RGD"/>
</dbReference>
<dbReference type="GO" id="GO:0090575">
    <property type="term" value="C:RNA polymerase II transcription regulator complex"/>
    <property type="evidence" value="ECO:0000266"/>
    <property type="project" value="RGD"/>
</dbReference>
<dbReference type="GO" id="GO:0030315">
    <property type="term" value="C:T-tubule"/>
    <property type="evidence" value="ECO:0000314"/>
    <property type="project" value="RGD"/>
</dbReference>
<dbReference type="GO" id="GO:0038186">
    <property type="term" value="F:bile acid nuclear receptor activity"/>
    <property type="evidence" value="ECO:0000266"/>
    <property type="project" value="RGD"/>
</dbReference>
<dbReference type="GO" id="GO:1902098">
    <property type="term" value="F:calcitriol binding"/>
    <property type="evidence" value="ECO:0000314"/>
    <property type="project" value="RGD"/>
</dbReference>
<dbReference type="GO" id="GO:0003677">
    <property type="term" value="F:DNA binding"/>
    <property type="evidence" value="ECO:0000266"/>
    <property type="project" value="RGD"/>
</dbReference>
<dbReference type="GO" id="GO:0003700">
    <property type="term" value="F:DNA-binding transcription factor activity"/>
    <property type="evidence" value="ECO:0000304"/>
    <property type="project" value="RGD"/>
</dbReference>
<dbReference type="GO" id="GO:1902121">
    <property type="term" value="F:lithocholic acid binding"/>
    <property type="evidence" value="ECO:0000266"/>
    <property type="project" value="RGD"/>
</dbReference>
<dbReference type="GO" id="GO:0004879">
    <property type="term" value="F:nuclear receptor activity"/>
    <property type="evidence" value="ECO:0000314"/>
    <property type="project" value="RGD"/>
</dbReference>
<dbReference type="GO" id="GO:0046965">
    <property type="term" value="F:nuclear retinoid X receptor binding"/>
    <property type="evidence" value="ECO:0000266"/>
    <property type="project" value="RGD"/>
</dbReference>
<dbReference type="GO" id="GO:0003707">
    <property type="term" value="F:nuclear steroid receptor activity"/>
    <property type="evidence" value="ECO:0000266"/>
    <property type="project" value="RGD"/>
</dbReference>
<dbReference type="GO" id="GO:0000978">
    <property type="term" value="F:RNA polymerase II cis-regulatory region sequence-specific DNA binding"/>
    <property type="evidence" value="ECO:0000318"/>
    <property type="project" value="GO_Central"/>
</dbReference>
<dbReference type="GO" id="GO:0043565">
    <property type="term" value="F:sequence-specific DNA binding"/>
    <property type="evidence" value="ECO:0000314"/>
    <property type="project" value="RGD"/>
</dbReference>
<dbReference type="GO" id="GO:0005499">
    <property type="term" value="F:vitamin D binding"/>
    <property type="evidence" value="ECO:0000314"/>
    <property type="project" value="RGD"/>
</dbReference>
<dbReference type="GO" id="GO:0008270">
    <property type="term" value="F:zinc ion binding"/>
    <property type="evidence" value="ECO:0007669"/>
    <property type="project" value="UniProtKB-KW"/>
</dbReference>
<dbReference type="GO" id="GO:0009887">
    <property type="term" value="P:animal organ morphogenesis"/>
    <property type="evidence" value="ECO:0000266"/>
    <property type="project" value="RGD"/>
</dbReference>
<dbReference type="GO" id="GO:0060057">
    <property type="term" value="P:apoptotic process involved in mammary gland involution"/>
    <property type="evidence" value="ECO:0000266"/>
    <property type="project" value="RGD"/>
</dbReference>
<dbReference type="GO" id="GO:0097190">
    <property type="term" value="P:apoptotic signaling pathway"/>
    <property type="evidence" value="ECO:0000314"/>
    <property type="project" value="RGD"/>
</dbReference>
<dbReference type="GO" id="GO:0006816">
    <property type="term" value="P:calcium ion transport"/>
    <property type="evidence" value="ECO:0000266"/>
    <property type="project" value="RGD"/>
</dbReference>
<dbReference type="GO" id="GO:0030154">
    <property type="term" value="P:cell differentiation"/>
    <property type="evidence" value="ECO:0000318"/>
    <property type="project" value="GO_Central"/>
</dbReference>
<dbReference type="GO" id="GO:0000902">
    <property type="term" value="P:cell morphogenesis"/>
    <property type="evidence" value="ECO:0000266"/>
    <property type="project" value="RGD"/>
</dbReference>
<dbReference type="GO" id="GO:1904646">
    <property type="term" value="P:cellular response to amyloid-beta"/>
    <property type="evidence" value="ECO:0000270"/>
    <property type="project" value="RGD"/>
</dbReference>
<dbReference type="GO" id="GO:0071305">
    <property type="term" value="P:cellular response to vitamin D"/>
    <property type="evidence" value="ECO:0000270"/>
    <property type="project" value="RGD"/>
</dbReference>
<dbReference type="GO" id="GO:0046697">
    <property type="term" value="P:decidualization"/>
    <property type="evidence" value="ECO:0000266"/>
    <property type="project" value="RGD"/>
</dbReference>
<dbReference type="GO" id="GO:0007507">
    <property type="term" value="P:heart development"/>
    <property type="evidence" value="ECO:0000270"/>
    <property type="project" value="RGD"/>
</dbReference>
<dbReference type="GO" id="GO:0050892">
    <property type="term" value="P:intestinal absorption"/>
    <property type="evidence" value="ECO:0000266"/>
    <property type="project" value="RGD"/>
</dbReference>
<dbReference type="GO" id="GO:0006874">
    <property type="term" value="P:intracellular calcium ion homeostasis"/>
    <property type="evidence" value="ECO:0000266"/>
    <property type="project" value="RGD"/>
</dbReference>
<dbReference type="GO" id="GO:0030522">
    <property type="term" value="P:intracellular receptor signaling pathway"/>
    <property type="evidence" value="ECO:0000318"/>
    <property type="project" value="GO_Central"/>
</dbReference>
<dbReference type="GO" id="GO:0007595">
    <property type="term" value="P:lactation"/>
    <property type="evidence" value="ECO:0000266"/>
    <property type="project" value="RGD"/>
</dbReference>
<dbReference type="GO" id="GO:0060745">
    <property type="term" value="P:mammary gland branching involved in pregnancy"/>
    <property type="evidence" value="ECO:0000266"/>
    <property type="project" value="RGD"/>
</dbReference>
<dbReference type="GO" id="GO:0042789">
    <property type="term" value="P:mRNA transcription by RNA polymerase II"/>
    <property type="evidence" value="ECO:0000266"/>
    <property type="project" value="RGD"/>
</dbReference>
<dbReference type="GO" id="GO:1900155">
    <property type="term" value="P:negative regulation of bone trabecula formation"/>
    <property type="evidence" value="ECO:0000315"/>
    <property type="project" value="RGD"/>
</dbReference>
<dbReference type="GO" id="GO:0008285">
    <property type="term" value="P:negative regulation of cell population proliferation"/>
    <property type="evidence" value="ECO:0000266"/>
    <property type="project" value="RGD"/>
</dbReference>
<dbReference type="GO" id="GO:0045892">
    <property type="term" value="P:negative regulation of DNA-templated transcription"/>
    <property type="evidence" value="ECO:0000266"/>
    <property type="project" value="RGD"/>
</dbReference>
<dbReference type="GO" id="GO:0010839">
    <property type="term" value="P:negative regulation of keratinocyte proliferation"/>
    <property type="evidence" value="ECO:0000266"/>
    <property type="project" value="RGD"/>
</dbReference>
<dbReference type="GO" id="GO:0030279">
    <property type="term" value="P:negative regulation of ossification"/>
    <property type="evidence" value="ECO:0000315"/>
    <property type="project" value="RGD"/>
</dbReference>
<dbReference type="GO" id="GO:0000122">
    <property type="term" value="P:negative regulation of transcription by RNA polymerase II"/>
    <property type="evidence" value="ECO:0000266"/>
    <property type="project" value="RGD"/>
</dbReference>
<dbReference type="GO" id="GO:0038185">
    <property type="term" value="P:nuclear receptor-mediated bile acid signaling pathway"/>
    <property type="evidence" value="ECO:0000266"/>
    <property type="project" value="RGD"/>
</dbReference>
<dbReference type="GO" id="GO:0035435">
    <property type="term" value="P:phosphate ion transmembrane transport"/>
    <property type="evidence" value="ECO:0000266"/>
    <property type="project" value="RGD"/>
</dbReference>
<dbReference type="GO" id="GO:0060058">
    <property type="term" value="P:positive regulation of apoptotic process involved in mammary gland involution"/>
    <property type="evidence" value="ECO:0000266"/>
    <property type="project" value="RGD"/>
</dbReference>
<dbReference type="GO" id="GO:0010628">
    <property type="term" value="P:positive regulation of gene expression"/>
    <property type="evidence" value="ECO:0000266"/>
    <property type="project" value="RGD"/>
</dbReference>
<dbReference type="GO" id="GO:0045618">
    <property type="term" value="P:positive regulation of keratinocyte differentiation"/>
    <property type="evidence" value="ECO:0000266"/>
    <property type="project" value="RGD"/>
</dbReference>
<dbReference type="GO" id="GO:2000830">
    <property type="term" value="P:positive regulation of parathyroid hormone secretion"/>
    <property type="evidence" value="ECO:0000315"/>
    <property type="project" value="RGD"/>
</dbReference>
<dbReference type="GO" id="GO:0045944">
    <property type="term" value="P:positive regulation of transcription by RNA polymerase II"/>
    <property type="evidence" value="ECO:0000266"/>
    <property type="project" value="RGD"/>
</dbReference>
<dbReference type="GO" id="GO:0070564">
    <property type="term" value="P:positive regulation of vitamin D receptor signaling pathway"/>
    <property type="evidence" value="ECO:0000266"/>
    <property type="project" value="RGD"/>
</dbReference>
<dbReference type="GO" id="GO:0051924">
    <property type="term" value="P:regulation of calcium ion transport"/>
    <property type="evidence" value="ECO:0000314"/>
    <property type="project" value="RGD"/>
</dbReference>
<dbReference type="GO" id="GO:0006355">
    <property type="term" value="P:regulation of DNA-templated transcription"/>
    <property type="evidence" value="ECO:0000266"/>
    <property type="project" value="RGD"/>
</dbReference>
<dbReference type="GO" id="GO:0006357">
    <property type="term" value="P:regulation of transcription by RNA polymerase II"/>
    <property type="evidence" value="ECO:0000304"/>
    <property type="project" value="RGD"/>
</dbReference>
<dbReference type="GO" id="GO:1904044">
    <property type="term" value="P:response to aldosterone"/>
    <property type="evidence" value="ECO:0000270"/>
    <property type="project" value="RGD"/>
</dbReference>
<dbReference type="GO" id="GO:1903412">
    <property type="term" value="P:response to bile acid"/>
    <property type="evidence" value="ECO:0000266"/>
    <property type="project" value="RGD"/>
</dbReference>
<dbReference type="GO" id="GO:0051592">
    <property type="term" value="P:response to calcium ion"/>
    <property type="evidence" value="ECO:0000270"/>
    <property type="project" value="RGD"/>
</dbReference>
<dbReference type="GO" id="GO:0032355">
    <property type="term" value="P:response to estradiol"/>
    <property type="evidence" value="ECO:0000270"/>
    <property type="project" value="RGD"/>
</dbReference>
<dbReference type="GO" id="GO:0048384">
    <property type="term" value="P:retinoic acid receptor signaling pathway"/>
    <property type="evidence" value="ECO:0000266"/>
    <property type="project" value="RGD"/>
</dbReference>
<dbReference type="GO" id="GO:0001501">
    <property type="term" value="P:skeletal system development"/>
    <property type="evidence" value="ECO:0000266"/>
    <property type="project" value="RGD"/>
</dbReference>
<dbReference type="GO" id="GO:0070561">
    <property type="term" value="P:vitamin D receptor signaling pathway"/>
    <property type="evidence" value="ECO:0000266"/>
    <property type="project" value="RGD"/>
</dbReference>
<dbReference type="CDD" id="cd06955">
    <property type="entry name" value="NR_DBD_VDR"/>
    <property type="match status" value="1"/>
</dbReference>
<dbReference type="CDD" id="cd06933">
    <property type="entry name" value="NR_LBD_VDR"/>
    <property type="match status" value="1"/>
</dbReference>
<dbReference type="FunFam" id="3.30.50.10:FF:000023">
    <property type="entry name" value="Vitamin D3 receptor"/>
    <property type="match status" value="1"/>
</dbReference>
<dbReference type="FunFam" id="1.10.565.10:FF:000021">
    <property type="entry name" value="Vitamin D3 receptor B"/>
    <property type="match status" value="1"/>
</dbReference>
<dbReference type="Gene3D" id="3.30.50.10">
    <property type="entry name" value="Erythroid Transcription Factor GATA-1, subunit A"/>
    <property type="match status" value="1"/>
</dbReference>
<dbReference type="Gene3D" id="1.10.565.10">
    <property type="entry name" value="Retinoid X Receptor"/>
    <property type="match status" value="1"/>
</dbReference>
<dbReference type="IDEAL" id="IID50032"/>
<dbReference type="InterPro" id="IPR042153">
    <property type="entry name" value="DBD_VDR"/>
</dbReference>
<dbReference type="InterPro" id="IPR035500">
    <property type="entry name" value="NHR-like_dom_sf"/>
</dbReference>
<dbReference type="InterPro" id="IPR000536">
    <property type="entry name" value="Nucl_hrmn_rcpt_lig-bd"/>
</dbReference>
<dbReference type="InterPro" id="IPR050234">
    <property type="entry name" value="Nuclear_hormone_rcpt_NR1"/>
</dbReference>
<dbReference type="InterPro" id="IPR001723">
    <property type="entry name" value="Nuclear_hrmn_rcpt"/>
</dbReference>
<dbReference type="InterPro" id="IPR000324">
    <property type="entry name" value="VitD_rcpt"/>
</dbReference>
<dbReference type="InterPro" id="IPR001628">
    <property type="entry name" value="Znf_hrmn_rcpt"/>
</dbReference>
<dbReference type="InterPro" id="IPR013088">
    <property type="entry name" value="Znf_NHR/GATA"/>
</dbReference>
<dbReference type="PANTHER" id="PTHR24082">
    <property type="entry name" value="NUCLEAR HORMONE RECEPTOR"/>
    <property type="match status" value="1"/>
</dbReference>
<dbReference type="PANTHER" id="PTHR24082:SF38">
    <property type="entry name" value="VITAMIN D3 RECEPTOR"/>
    <property type="match status" value="1"/>
</dbReference>
<dbReference type="Pfam" id="PF00104">
    <property type="entry name" value="Hormone_recep"/>
    <property type="match status" value="1"/>
</dbReference>
<dbReference type="Pfam" id="PF00105">
    <property type="entry name" value="zf-C4"/>
    <property type="match status" value="1"/>
</dbReference>
<dbReference type="PRINTS" id="PR00398">
    <property type="entry name" value="STRDHORMONER"/>
</dbReference>
<dbReference type="PRINTS" id="PR00047">
    <property type="entry name" value="STROIDFINGER"/>
</dbReference>
<dbReference type="PRINTS" id="PR00350">
    <property type="entry name" value="VITAMINDR"/>
</dbReference>
<dbReference type="SMART" id="SM00430">
    <property type="entry name" value="HOLI"/>
    <property type="match status" value="1"/>
</dbReference>
<dbReference type="SMART" id="SM00399">
    <property type="entry name" value="ZnF_C4"/>
    <property type="match status" value="1"/>
</dbReference>
<dbReference type="SUPFAM" id="SSF57716">
    <property type="entry name" value="Glucocorticoid receptor-like (DNA-binding domain)"/>
    <property type="match status" value="1"/>
</dbReference>
<dbReference type="SUPFAM" id="SSF48508">
    <property type="entry name" value="Nuclear receptor ligand-binding domain"/>
    <property type="match status" value="1"/>
</dbReference>
<dbReference type="PROSITE" id="PS51843">
    <property type="entry name" value="NR_LBD"/>
    <property type="match status" value="1"/>
</dbReference>
<dbReference type="PROSITE" id="PS00031">
    <property type="entry name" value="NUCLEAR_REC_DBD_1"/>
    <property type="match status" value="1"/>
</dbReference>
<dbReference type="PROSITE" id="PS51030">
    <property type="entry name" value="NUCLEAR_REC_DBD_2"/>
    <property type="match status" value="1"/>
</dbReference>
<protein>
    <recommendedName>
        <fullName>Vitamin D3 receptor</fullName>
        <shortName>VDR</shortName>
    </recommendedName>
    <alternativeName>
        <fullName>1,25-dihydroxyvitamin D3 receptor</fullName>
    </alternativeName>
    <alternativeName>
        <fullName>Nuclear receptor subfamily 1 group I member 1</fullName>
    </alternativeName>
</protein>
<feature type="chain" id="PRO_0000053544" description="Vitamin D3 receptor">
    <location>
        <begin position="1"/>
        <end position="423"/>
    </location>
</feature>
<feature type="domain" description="NR LBD" evidence="4">
    <location>
        <begin position="127"/>
        <end position="419"/>
    </location>
</feature>
<feature type="DNA-binding region" description="Nuclear receptor" evidence="3">
    <location>
        <begin position="24"/>
        <end position="89"/>
    </location>
</feature>
<feature type="zinc finger region" description="NR C4-type" evidence="3">
    <location>
        <begin position="24"/>
        <end position="44"/>
    </location>
</feature>
<feature type="zinc finger region" description="NR C4-type" evidence="3">
    <location>
        <begin position="60"/>
        <end position="84"/>
    </location>
</feature>
<feature type="region of interest" description="Hinge" evidence="1">
    <location>
        <begin position="97"/>
        <end position="126"/>
    </location>
</feature>
<feature type="region of interest" description="Disordered" evidence="5">
    <location>
        <begin position="159"/>
        <end position="180"/>
    </location>
</feature>
<feature type="region of interest" description="Interaction with coactivator LXXLL motif" evidence="7">
    <location>
        <begin position="242"/>
        <end position="260"/>
    </location>
</feature>
<feature type="short sequence motif" description="9aaTAD" evidence="1">
    <location>
        <begin position="412"/>
        <end position="420"/>
    </location>
</feature>
<feature type="compositionally biased region" description="Low complexity" evidence="5">
    <location>
        <begin position="171"/>
        <end position="180"/>
    </location>
</feature>
<feature type="binding site" evidence="1">
    <location>
        <position position="24"/>
    </location>
    <ligand>
        <name>Zn(2+)</name>
        <dbReference type="ChEBI" id="CHEBI:29105"/>
        <label>1</label>
    </ligand>
</feature>
<feature type="binding site" evidence="1">
    <location>
        <position position="27"/>
    </location>
    <ligand>
        <name>Zn(2+)</name>
        <dbReference type="ChEBI" id="CHEBI:29105"/>
        <label>1</label>
    </ligand>
</feature>
<feature type="binding site" evidence="1">
    <location>
        <position position="41"/>
    </location>
    <ligand>
        <name>Zn(2+)</name>
        <dbReference type="ChEBI" id="CHEBI:29105"/>
        <label>1</label>
    </ligand>
</feature>
<feature type="binding site" evidence="1">
    <location>
        <position position="44"/>
    </location>
    <ligand>
        <name>Zn(2+)</name>
        <dbReference type="ChEBI" id="CHEBI:29105"/>
        <label>1</label>
    </ligand>
</feature>
<feature type="binding site" evidence="1">
    <location>
        <position position="60"/>
    </location>
    <ligand>
        <name>Zn(2+)</name>
        <dbReference type="ChEBI" id="CHEBI:29105"/>
        <label>2</label>
    </ligand>
</feature>
<feature type="binding site" evidence="1">
    <location>
        <position position="66"/>
    </location>
    <ligand>
        <name>Zn(2+)</name>
        <dbReference type="ChEBI" id="CHEBI:29105"/>
        <label>2</label>
    </ligand>
</feature>
<feature type="binding site" evidence="1">
    <location>
        <position position="76"/>
    </location>
    <ligand>
        <name>Zn(2+)</name>
        <dbReference type="ChEBI" id="CHEBI:29105"/>
        <label>2</label>
    </ligand>
</feature>
<feature type="binding site" evidence="1">
    <location>
        <position position="79"/>
    </location>
    <ligand>
        <name>Zn(2+)</name>
        <dbReference type="ChEBI" id="CHEBI:29105"/>
        <label>2</label>
    </ligand>
</feature>
<feature type="binding site" evidence="7 12">
    <location>
        <position position="143"/>
    </location>
    <ligand>
        <name>calcitriol</name>
        <dbReference type="ChEBI" id="CHEBI:17823"/>
    </ligand>
</feature>
<feature type="binding site" evidence="7 12">
    <location>
        <position position="233"/>
    </location>
    <ligand>
        <name>calcitriol</name>
        <dbReference type="ChEBI" id="CHEBI:17823"/>
    </ligand>
</feature>
<feature type="binding site" evidence="7 12">
    <location>
        <position position="270"/>
    </location>
    <ligand>
        <name>calcitriol</name>
        <dbReference type="ChEBI" id="CHEBI:17823"/>
    </ligand>
</feature>
<feature type="binding site" evidence="7 12">
    <location>
        <position position="274"/>
    </location>
    <ligand>
        <name>calcitriol</name>
        <dbReference type="ChEBI" id="CHEBI:17823"/>
    </ligand>
</feature>
<feature type="binding site" evidence="7 12">
    <location>
        <position position="301"/>
    </location>
    <ligand>
        <name>calcitriol</name>
        <dbReference type="ChEBI" id="CHEBI:17823"/>
    </ligand>
</feature>
<feature type="binding site" evidence="7 12">
    <location>
        <position position="393"/>
    </location>
    <ligand>
        <name>calcitriol</name>
        <dbReference type="ChEBI" id="CHEBI:17823"/>
    </ligand>
</feature>
<feature type="helix" evidence="17">
    <location>
        <begin position="116"/>
        <end position="119"/>
    </location>
</feature>
<feature type="helix" evidence="18">
    <location>
        <begin position="126"/>
        <end position="142"/>
    </location>
</feature>
<feature type="helix" evidence="18">
    <location>
        <begin position="148"/>
        <end position="152"/>
    </location>
</feature>
<feature type="turn" evidence="17">
    <location>
        <begin position="219"/>
        <end position="222"/>
    </location>
</feature>
<feature type="helix" evidence="18">
    <location>
        <begin position="223"/>
        <end position="241"/>
    </location>
</feature>
<feature type="helix" evidence="18">
    <location>
        <begin position="247"/>
        <end position="249"/>
    </location>
</feature>
<feature type="helix" evidence="18">
    <location>
        <begin position="252"/>
        <end position="270"/>
    </location>
</feature>
<feature type="helix" evidence="18">
    <location>
        <begin position="271"/>
        <end position="273"/>
    </location>
</feature>
<feature type="strand" evidence="19">
    <location>
        <begin position="274"/>
        <end position="276"/>
    </location>
</feature>
<feature type="turn" evidence="18">
    <location>
        <begin position="277"/>
        <end position="280"/>
    </location>
</feature>
<feature type="strand" evidence="18">
    <location>
        <begin position="281"/>
        <end position="283"/>
    </location>
</feature>
<feature type="helix" evidence="18">
    <location>
        <begin position="287"/>
        <end position="289"/>
    </location>
</feature>
<feature type="strand" evidence="19">
    <location>
        <begin position="290"/>
        <end position="292"/>
    </location>
</feature>
<feature type="helix" evidence="18">
    <location>
        <begin position="293"/>
        <end position="297"/>
    </location>
</feature>
<feature type="turn" evidence="18">
    <location>
        <begin position="298"/>
        <end position="300"/>
    </location>
</feature>
<feature type="helix" evidence="18">
    <location>
        <begin position="303"/>
        <end position="317"/>
    </location>
</feature>
<feature type="helix" evidence="18">
    <location>
        <begin position="323"/>
        <end position="334"/>
    </location>
</feature>
<feature type="strand" evidence="20">
    <location>
        <begin position="337"/>
        <end position="339"/>
    </location>
</feature>
<feature type="helix" evidence="18">
    <location>
        <begin position="345"/>
        <end position="366"/>
    </location>
</feature>
<feature type="turn" evidence="18">
    <location>
        <begin position="369"/>
        <end position="374"/>
    </location>
</feature>
<feature type="helix" evidence="18">
    <location>
        <begin position="375"/>
        <end position="401"/>
    </location>
</feature>
<feature type="helix" evidence="18">
    <location>
        <begin position="404"/>
        <end position="407"/>
    </location>
</feature>
<feature type="helix" evidence="18">
    <location>
        <begin position="412"/>
        <end position="418"/>
    </location>
</feature>
<proteinExistence type="evidence at protein level"/>
<sequence>MEATAASTSLPDPGDFDRNVPRICGVCGDRATGFHFNAMTCEGCKGFFRRSMKRKALFTCPFNGDCRITKDNRRHCQACRLKRCVDIGMMKEFILTDEEVQRKREMIMKRKEEEALKDSLRPKLSEEQQHIIAILLDAHHKTYDPTYADFRDFRPPVRMDGSTGSYSPRPTLSFSGNSSSSSSDLYTTSLDMMEPSGFSNLDLNGEDSDDPSVTLDLSPLSMLPHLADLVSYSIQKVIGFAKMIPGFRDLTSDDQIVLLKSSAIEVIMLRSNQSFTMDDMSWDCGSQDYKYDVTDVSKAGHTLELIEPLIKFQVGLKKLNLHEEEHVLLMAICIVSPDRPGVQDAKLVEAIQDRLSNTLQTYIRCRHPPPGSHQLYAKMIQKLADLRSLNEEHSKQYRSLSFQPENSMKLTPLVLEVFGNEIS</sequence>
<accession>P13053</accession>
<comment type="function">
    <text evidence="1 8">Nuclear receptor for calcitriol, the active form of vitamin D3 which mediates the action of this vitamin on cells (PubMed:17227670). Enters the nucleus upon vitamin D3 binding where it forms heterodimers with the retinoid X receptor/RXR (By similarity). The VDR-RXR heterodimers bind to specific response elements on DNA and activate the transcription of vitamin D3-responsive target genes (By similarity). Plays a central role in calcium homeostasis (PubMed:17227670). Also functions as a receptor for the secondary bile acid lithocholic acid (LCA) and its metabolites (By similarity).</text>
</comment>
<comment type="subunit">
    <text evidence="1 2 6 7 8">Homodimer in the absence of bound vitamin D3 (By similarity). Heterodimer with RXRA after vitamin D3 binding (By similarity). Interacts with MED1 and NCOA6 (PubMed:10866662, PubMed:15065852, PubMed:17227670). Interacts with MED1, NCOA1, NCOA2, NCOA3 and NCOA6 coactivators, leading to a strong increase of transcription of target genes (By similarity). Interacts with the corepressor NCOR1 (By similarity). Interacts with SNW1 (By similarity). Interacts with IRX4, the interaction does not affect its transactivation activity (By similarity). Interacts with CRY1 (By similarity). Interacts with CRY2 in a ligand-dependent manner (By similarity).</text>
</comment>
<comment type="subcellular location">
    <subcellularLocation>
        <location evidence="1 3">Nucleus</location>
    </subcellularLocation>
    <subcellularLocation>
        <location evidence="1">Cytoplasm</location>
    </subcellularLocation>
    <text evidence="1">Localizes mainly to the nucleus. Translocated into the nucleus via both ligand-dependent and ligand-independent pathways; ligand-independent nuclear translocation is mediated by IPO4.</text>
</comment>
<comment type="tissue specificity">
    <text evidence="9">Detected in intestine and kidney.</text>
</comment>
<comment type="domain">
    <text evidence="1">Composed of three domains: a modulating N-terminal domain, a DNA-binding domain and a C-terminal ligand-binding domain.</text>
</comment>
<comment type="domain">
    <text evidence="1">The 9aaTAD motif is a transactivation domain present in a large number of yeast and animal transcription factors.</text>
</comment>
<comment type="PTM">
    <text evidence="1">Ubiquitinated by UBR5, leading to its degradation: UBR5 specifically recognizes and binds ligand-bound VDR when it is not associated with coactivators (NCOAs). In presence of NCOAs, the UBR5-degron is not accessible, preventing its ubiquitination and degradation.</text>
</comment>
<comment type="similarity">
    <text evidence="10">Belongs to the nuclear hormone receptor family. NR1 subfamily.</text>
</comment>